<comment type="function">
    <text evidence="1">Involved in ribosome biogenesis and cell polarity. Required for the synthesis of both 40S and 60S ribosomal subunits and may also play some direct role in correct positioning of the mitotic spindle during mitosis (By similarity).</text>
</comment>
<comment type="subunit">
    <text evidence="1">Component of the 90S and 60S pre-ribosomal particles.</text>
</comment>
<comment type="subcellular location">
    <subcellularLocation>
        <location evidence="4">Nucleus</location>
        <location evidence="4">Nucleolus</location>
    </subcellularLocation>
</comment>
<comment type="similarity">
    <text evidence="6">Belongs to the SURF6 family.</text>
</comment>
<protein>
    <recommendedName>
        <fullName>Ribosomal RNA-processing protein 14-C</fullName>
    </recommendedName>
    <alternativeName>
        <fullName>Ribosome biogenesis protein rrp14-C</fullName>
    </alternativeName>
</protein>
<reference key="1">
    <citation type="journal article" date="2002" name="Nature">
        <title>The genome sequence of Schizosaccharomyces pombe.</title>
        <authorList>
            <person name="Wood V."/>
            <person name="Gwilliam R."/>
            <person name="Rajandream M.A."/>
            <person name="Lyne M.H."/>
            <person name="Lyne R."/>
            <person name="Stewart A."/>
            <person name="Sgouros J.G."/>
            <person name="Peat N."/>
            <person name="Hayles J."/>
            <person name="Baker S.G."/>
            <person name="Basham D."/>
            <person name="Bowman S."/>
            <person name="Brooks K."/>
            <person name="Brown D."/>
            <person name="Brown S."/>
            <person name="Chillingworth T."/>
            <person name="Churcher C.M."/>
            <person name="Collins M."/>
            <person name="Connor R."/>
            <person name="Cronin A."/>
            <person name="Davis P."/>
            <person name="Feltwell T."/>
            <person name="Fraser A."/>
            <person name="Gentles S."/>
            <person name="Goble A."/>
            <person name="Hamlin N."/>
            <person name="Harris D.E."/>
            <person name="Hidalgo J."/>
            <person name="Hodgson G."/>
            <person name="Holroyd S."/>
            <person name="Hornsby T."/>
            <person name="Howarth S."/>
            <person name="Huckle E.J."/>
            <person name="Hunt S."/>
            <person name="Jagels K."/>
            <person name="James K.D."/>
            <person name="Jones L."/>
            <person name="Jones M."/>
            <person name="Leather S."/>
            <person name="McDonald S."/>
            <person name="McLean J."/>
            <person name="Mooney P."/>
            <person name="Moule S."/>
            <person name="Mungall K.L."/>
            <person name="Murphy L.D."/>
            <person name="Niblett D."/>
            <person name="Odell C."/>
            <person name="Oliver K."/>
            <person name="O'Neil S."/>
            <person name="Pearson D."/>
            <person name="Quail M.A."/>
            <person name="Rabbinowitsch E."/>
            <person name="Rutherford K.M."/>
            <person name="Rutter S."/>
            <person name="Saunders D."/>
            <person name="Seeger K."/>
            <person name="Sharp S."/>
            <person name="Skelton J."/>
            <person name="Simmonds M.N."/>
            <person name="Squares R."/>
            <person name="Squares S."/>
            <person name="Stevens K."/>
            <person name="Taylor K."/>
            <person name="Taylor R.G."/>
            <person name="Tivey A."/>
            <person name="Walsh S.V."/>
            <person name="Warren T."/>
            <person name="Whitehead S."/>
            <person name="Woodward J.R."/>
            <person name="Volckaert G."/>
            <person name="Aert R."/>
            <person name="Robben J."/>
            <person name="Grymonprez B."/>
            <person name="Weltjens I."/>
            <person name="Vanstreels E."/>
            <person name="Rieger M."/>
            <person name="Schaefer M."/>
            <person name="Mueller-Auer S."/>
            <person name="Gabel C."/>
            <person name="Fuchs M."/>
            <person name="Duesterhoeft A."/>
            <person name="Fritzc C."/>
            <person name="Holzer E."/>
            <person name="Moestl D."/>
            <person name="Hilbert H."/>
            <person name="Borzym K."/>
            <person name="Langer I."/>
            <person name="Beck A."/>
            <person name="Lehrach H."/>
            <person name="Reinhardt R."/>
            <person name="Pohl T.M."/>
            <person name="Eger P."/>
            <person name="Zimmermann W."/>
            <person name="Wedler H."/>
            <person name="Wambutt R."/>
            <person name="Purnelle B."/>
            <person name="Goffeau A."/>
            <person name="Cadieu E."/>
            <person name="Dreano S."/>
            <person name="Gloux S."/>
            <person name="Lelaure V."/>
            <person name="Mottier S."/>
            <person name="Galibert F."/>
            <person name="Aves S.J."/>
            <person name="Xiang Z."/>
            <person name="Hunt C."/>
            <person name="Moore K."/>
            <person name="Hurst S.M."/>
            <person name="Lucas M."/>
            <person name="Rochet M."/>
            <person name="Gaillardin C."/>
            <person name="Tallada V.A."/>
            <person name="Garzon A."/>
            <person name="Thode G."/>
            <person name="Daga R.R."/>
            <person name="Cruzado L."/>
            <person name="Jimenez J."/>
            <person name="Sanchez M."/>
            <person name="del Rey F."/>
            <person name="Benito J."/>
            <person name="Dominguez A."/>
            <person name="Revuelta J.L."/>
            <person name="Moreno S."/>
            <person name="Armstrong J."/>
            <person name="Forsburg S.L."/>
            <person name="Cerutti L."/>
            <person name="Lowe T."/>
            <person name="McCombie W.R."/>
            <person name="Paulsen I."/>
            <person name="Potashkin J."/>
            <person name="Shpakovski G.V."/>
            <person name="Ussery D."/>
            <person name="Barrell B.G."/>
            <person name="Nurse P."/>
        </authorList>
    </citation>
    <scope>NUCLEOTIDE SEQUENCE [LARGE SCALE GENOMIC DNA]</scope>
    <source>
        <strain>972 / ATCC 24843</strain>
    </source>
</reference>
<reference key="2">
    <citation type="journal article" date="2006" name="Nat. Biotechnol.">
        <title>ORFeome cloning and global analysis of protein localization in the fission yeast Schizosaccharomyces pombe.</title>
        <authorList>
            <person name="Matsuyama A."/>
            <person name="Arai R."/>
            <person name="Yashiroda Y."/>
            <person name="Shirai A."/>
            <person name="Kamata A."/>
            <person name="Sekido S."/>
            <person name="Kobayashi Y."/>
            <person name="Hashimoto A."/>
            <person name="Hamamoto M."/>
            <person name="Hiraoka Y."/>
            <person name="Horinouchi S."/>
            <person name="Yoshida M."/>
        </authorList>
    </citation>
    <scope>SUBCELLULAR LOCATION [LARGE SCALE ANALYSIS]</scope>
</reference>
<reference key="3">
    <citation type="journal article" date="2008" name="J. Proteome Res.">
        <title>Phosphoproteome analysis of fission yeast.</title>
        <authorList>
            <person name="Wilson-Grady J.T."/>
            <person name="Villen J."/>
            <person name="Gygi S.P."/>
        </authorList>
    </citation>
    <scope>PHOSPHORYLATION [LARGE SCALE ANALYSIS] AT SER-75</scope>
    <scope>IDENTIFICATION BY MASS SPECTROMETRY</scope>
</reference>
<dbReference type="EMBL" id="CU329671">
    <property type="protein sequence ID" value="CAA17035.1"/>
    <property type="molecule type" value="Genomic_DNA"/>
</dbReference>
<dbReference type="PIR" id="T40775">
    <property type="entry name" value="T40775"/>
</dbReference>
<dbReference type="SMR" id="O43082"/>
<dbReference type="FunCoup" id="O43082">
    <property type="interactions" value="87"/>
</dbReference>
<dbReference type="STRING" id="284812.O43082"/>
<dbReference type="iPTMnet" id="O43082"/>
<dbReference type="PaxDb" id="4896-SPBC947.07.1"/>
<dbReference type="EnsemblFungi" id="SPBC947.07.1">
    <property type="protein sequence ID" value="SPBC947.07.1:pep"/>
    <property type="gene ID" value="SPBC947.07"/>
</dbReference>
<dbReference type="KEGG" id="spo:2541261"/>
<dbReference type="PomBase" id="SPBC947.07"/>
<dbReference type="VEuPathDB" id="FungiDB:SPBC947.07"/>
<dbReference type="eggNOG" id="KOG2885">
    <property type="taxonomic scope" value="Eukaryota"/>
</dbReference>
<dbReference type="HOGENOM" id="CLU_1143100_0_0_1"/>
<dbReference type="InParanoid" id="O43082"/>
<dbReference type="OMA" id="RIETTQK"/>
<dbReference type="PhylomeDB" id="O43082"/>
<dbReference type="PRO" id="PR:O43082"/>
<dbReference type="Proteomes" id="UP000002485">
    <property type="component" value="Chromosome II"/>
</dbReference>
<dbReference type="GO" id="GO:0005730">
    <property type="term" value="C:nucleolus"/>
    <property type="evidence" value="ECO:0007005"/>
    <property type="project" value="PomBase"/>
</dbReference>
<dbReference type="GO" id="GO:0003677">
    <property type="term" value="F:DNA binding"/>
    <property type="evidence" value="ECO:0000318"/>
    <property type="project" value="GO_Central"/>
</dbReference>
<dbReference type="GO" id="GO:0003723">
    <property type="term" value="F:RNA binding"/>
    <property type="evidence" value="ECO:0000318"/>
    <property type="project" value="GO_Central"/>
</dbReference>
<dbReference type="GO" id="GO:0042273">
    <property type="term" value="P:ribosomal large subunit biogenesis"/>
    <property type="evidence" value="ECO:0000318"/>
    <property type="project" value="GO_Central"/>
</dbReference>
<dbReference type="GO" id="GO:0042274">
    <property type="term" value="P:ribosomal small subunit biogenesis"/>
    <property type="evidence" value="ECO:0000318"/>
    <property type="project" value="GO_Central"/>
</dbReference>
<dbReference type="GO" id="GO:0006364">
    <property type="term" value="P:rRNA processing"/>
    <property type="evidence" value="ECO:0007669"/>
    <property type="project" value="UniProtKB-KW"/>
</dbReference>
<dbReference type="InterPro" id="IPR029190">
    <property type="entry name" value="Rrp14/SURF6_C"/>
</dbReference>
<dbReference type="InterPro" id="IPR007019">
    <property type="entry name" value="SURF6"/>
</dbReference>
<dbReference type="PANTHER" id="PTHR14369">
    <property type="entry name" value="SURFEIT LOCUS PROTEIN 6"/>
    <property type="match status" value="1"/>
</dbReference>
<dbReference type="PANTHER" id="PTHR14369:SF0">
    <property type="entry name" value="SURFEIT LOCUS PROTEIN 6"/>
    <property type="match status" value="1"/>
</dbReference>
<dbReference type="Pfam" id="PF04935">
    <property type="entry name" value="SURF6"/>
    <property type="match status" value="1"/>
</dbReference>
<name>RR14C_SCHPO</name>
<evidence type="ECO:0000250" key="1"/>
<evidence type="ECO:0000255" key="2"/>
<evidence type="ECO:0000256" key="3">
    <source>
        <dbReference type="SAM" id="MobiDB-lite"/>
    </source>
</evidence>
<evidence type="ECO:0000269" key="4">
    <source>
    </source>
</evidence>
<evidence type="ECO:0000269" key="5">
    <source>
    </source>
</evidence>
<evidence type="ECO:0000305" key="6"/>
<organism>
    <name type="scientific">Schizosaccharomyces pombe (strain 972 / ATCC 24843)</name>
    <name type="common">Fission yeast</name>
    <dbReference type="NCBI Taxonomy" id="284812"/>
    <lineage>
        <taxon>Eukaryota</taxon>
        <taxon>Fungi</taxon>
        <taxon>Dikarya</taxon>
        <taxon>Ascomycota</taxon>
        <taxon>Taphrinomycotina</taxon>
        <taxon>Schizosaccharomycetes</taxon>
        <taxon>Schizosaccharomycetales</taxon>
        <taxon>Schizosaccharomycetaceae</taxon>
        <taxon>Schizosaccharomyces</taxon>
    </lineage>
</organism>
<gene>
    <name type="primary">rrp14c</name>
    <name type="ORF">SPBC947.07</name>
</gene>
<feature type="chain" id="PRO_0000356272" description="Ribosomal RNA-processing protein 14-C">
    <location>
        <begin position="1"/>
        <end position="233"/>
    </location>
</feature>
<feature type="region of interest" description="Disordered" evidence="3">
    <location>
        <begin position="47"/>
        <end position="87"/>
    </location>
</feature>
<feature type="region of interest" description="Disordered" evidence="3">
    <location>
        <begin position="130"/>
        <end position="149"/>
    </location>
</feature>
<feature type="region of interest" description="Disordered" evidence="3">
    <location>
        <begin position="164"/>
        <end position="233"/>
    </location>
</feature>
<feature type="coiled-coil region" evidence="2">
    <location>
        <begin position="32"/>
        <end position="65"/>
    </location>
</feature>
<feature type="coiled-coil region" evidence="2">
    <location>
        <begin position="122"/>
        <end position="223"/>
    </location>
</feature>
<feature type="compositionally biased region" description="Basic and acidic residues" evidence="3">
    <location>
        <begin position="47"/>
        <end position="64"/>
    </location>
</feature>
<feature type="compositionally biased region" description="Basic and acidic residues" evidence="3">
    <location>
        <begin position="133"/>
        <end position="149"/>
    </location>
</feature>
<feature type="compositionally biased region" description="Basic and acidic residues" evidence="3">
    <location>
        <begin position="180"/>
        <end position="209"/>
    </location>
</feature>
<feature type="compositionally biased region" description="Basic residues" evidence="3">
    <location>
        <begin position="210"/>
        <end position="233"/>
    </location>
</feature>
<feature type="modified residue" description="Phosphoserine" evidence="5">
    <location>
        <position position="75"/>
    </location>
</feature>
<keyword id="KW-0175">Coiled coil</keyword>
<keyword id="KW-0539">Nucleus</keyword>
<keyword id="KW-0597">Phosphoprotein</keyword>
<keyword id="KW-1185">Reference proteome</keyword>
<keyword id="KW-0690">Ribosome biogenesis</keyword>
<keyword id="KW-0698">rRNA processing</keyword>
<proteinExistence type="evidence at protein level"/>
<accession>O43082</accession>
<sequence>METTEGKNDLRAKLAEKIQTFRSQRKATEKVDRALLLQRRKEKAKARAEAKKLAKKESKAKQESKVAAYDTGNSSDNIADEENDNHKSTITYGTLIVGDDKFSNGKLKVAGKKRGPTDVFGALKHLEAKKRRIESMDEEKRRKIEESDKWHRVLLQAEGKKLKDNEQLLKKSIRRKEKEKKKSSDAWKERKDNEKKAMLMRQQRREENLKKRRESKKSKKGKAPKKKKPSKKK</sequence>